<comment type="function">
    <text evidence="2">Does not function as a glutathione-disulfide oxidoreductase in the presence of glutathione and glutathione reductase. Has low thioredoxin activity in vitro.</text>
</comment>
<comment type="similarity">
    <text evidence="4">Belongs to the glutaredoxin family.</text>
</comment>
<sequence length="77" mass="8455">MMKIQIYGTGCANCQMLEKNAREAVKELGIDAEFEKIKEMDQILEAGLTALPGLAVDGELKIMGRVASKEEIKKILS</sequence>
<organism evidence="5">
    <name type="scientific">Methanothermobacter thermautotrophicus (strain ATCC 29096 / DSM 1053 / JCM 10044 / NBRC 100330 / Delta H)</name>
    <name type="common">Methanobacterium thermoautotrophicum</name>
    <dbReference type="NCBI Taxonomy" id="187420"/>
    <lineage>
        <taxon>Archaea</taxon>
        <taxon>Methanobacteriati</taxon>
        <taxon>Methanobacteriota</taxon>
        <taxon>Methanomada group</taxon>
        <taxon>Methanobacteria</taxon>
        <taxon>Methanobacteriales</taxon>
        <taxon>Methanobacteriaceae</taxon>
        <taxon>Methanothermobacter</taxon>
    </lineage>
</organism>
<keyword id="KW-0002">3D-structure</keyword>
<keyword id="KW-1015">Disulfide bond</keyword>
<keyword id="KW-0249">Electron transport</keyword>
<keyword id="KW-0676">Redox-active center</keyword>
<keyword id="KW-1185">Reference proteome</keyword>
<keyword id="KW-0813">Transport</keyword>
<dbReference type="EMBL" id="AE000666">
    <property type="protein sequence ID" value="AAB85393.1"/>
    <property type="molecule type" value="Genomic_DNA"/>
</dbReference>
<dbReference type="PIR" id="F69219">
    <property type="entry name" value="F69219"/>
</dbReference>
<dbReference type="PDB" id="1ILO">
    <property type="method" value="NMR"/>
    <property type="chains" value="A=1-77"/>
</dbReference>
<dbReference type="PDBsum" id="1ILO"/>
<dbReference type="BMRB" id="O26981"/>
<dbReference type="SMR" id="O26981"/>
<dbReference type="STRING" id="187420.MTH_895"/>
<dbReference type="PaxDb" id="187420-MTH_895"/>
<dbReference type="DNASU" id="1471303"/>
<dbReference type="EnsemblBacteria" id="AAB85393">
    <property type="protein sequence ID" value="AAB85393"/>
    <property type="gene ID" value="MTH_895"/>
</dbReference>
<dbReference type="KEGG" id="mth:MTH_895"/>
<dbReference type="HOGENOM" id="CLU_090389_18_2_2"/>
<dbReference type="InParanoid" id="O26981"/>
<dbReference type="EvolutionaryTrace" id="O26981"/>
<dbReference type="Proteomes" id="UP000005223">
    <property type="component" value="Chromosome"/>
</dbReference>
<dbReference type="GO" id="GO:0015035">
    <property type="term" value="F:protein-disulfide reductase activity"/>
    <property type="evidence" value="ECO:0000314"/>
    <property type="project" value="UniProtKB"/>
</dbReference>
<dbReference type="FunFam" id="3.40.30.10:FF:000637">
    <property type="entry name" value="Thioredoxin"/>
    <property type="match status" value="1"/>
</dbReference>
<dbReference type="Gene3D" id="3.40.30.10">
    <property type="entry name" value="Glutaredoxin"/>
    <property type="match status" value="1"/>
</dbReference>
<dbReference type="InterPro" id="IPR012336">
    <property type="entry name" value="Thioredoxin-like_fold"/>
</dbReference>
<dbReference type="InterPro" id="IPR036249">
    <property type="entry name" value="Thioredoxin-like_sf"/>
</dbReference>
<dbReference type="InterPro" id="IPR005243">
    <property type="entry name" value="THIRX-like_proc"/>
</dbReference>
<dbReference type="NCBIfam" id="TIGR00412">
    <property type="entry name" value="redox_disulf_2"/>
    <property type="match status" value="1"/>
</dbReference>
<dbReference type="PANTHER" id="PTHR36450">
    <property type="entry name" value="THIOREDOXIN"/>
    <property type="match status" value="1"/>
</dbReference>
<dbReference type="PANTHER" id="PTHR36450:SF1">
    <property type="entry name" value="THIOREDOXIN"/>
    <property type="match status" value="1"/>
</dbReference>
<dbReference type="Pfam" id="PF13192">
    <property type="entry name" value="Thioredoxin_3"/>
    <property type="match status" value="1"/>
</dbReference>
<dbReference type="PIRSF" id="PIRSF037031">
    <property type="entry name" value="Redox_disulphide_2"/>
    <property type="match status" value="1"/>
</dbReference>
<dbReference type="SUPFAM" id="SSF52833">
    <property type="entry name" value="Thioredoxin-like"/>
    <property type="match status" value="1"/>
</dbReference>
<proteinExistence type="evidence at protein level"/>
<feature type="chain" id="PRO_0000431069" description="Thioredoxin">
    <location>
        <begin position="1"/>
        <end position="77"/>
    </location>
</feature>
<feature type="active site" description="Nucleophile" evidence="1">
    <location>
        <position position="11"/>
    </location>
</feature>
<feature type="active site" description="Nucleophile" evidence="1">
    <location>
        <position position="14"/>
    </location>
</feature>
<feature type="disulfide bond" description="Redox-active" evidence="3">
    <location>
        <begin position="11"/>
        <end position="14"/>
    </location>
</feature>
<feature type="strand" evidence="8">
    <location>
        <begin position="2"/>
        <end position="7"/>
    </location>
</feature>
<feature type="strand" evidence="8">
    <location>
        <begin position="9"/>
        <end position="12"/>
    </location>
</feature>
<feature type="helix" evidence="8">
    <location>
        <begin position="15"/>
        <end position="27"/>
    </location>
</feature>
<feature type="strand" evidence="8">
    <location>
        <begin position="32"/>
        <end position="37"/>
    </location>
</feature>
<feature type="helix" evidence="8">
    <location>
        <begin position="40"/>
        <end position="46"/>
    </location>
</feature>
<feature type="strand" evidence="8">
    <location>
        <begin position="49"/>
        <end position="52"/>
    </location>
</feature>
<feature type="strand" evidence="8">
    <location>
        <begin position="54"/>
        <end position="56"/>
    </location>
</feature>
<feature type="strand" evidence="8">
    <location>
        <begin position="59"/>
        <end position="62"/>
    </location>
</feature>
<feature type="helix" evidence="8">
    <location>
        <begin position="69"/>
        <end position="75"/>
    </location>
</feature>
<name>THIRX_METTH</name>
<gene>
    <name evidence="5" type="ordered locus">MTH_895</name>
</gene>
<reference key="1">
    <citation type="journal article" date="1997" name="J. Bacteriol.">
        <title>Complete genome sequence of Methanobacterium thermoautotrophicum deltaH: functional analysis and comparative genomics.</title>
        <authorList>
            <person name="Smith D.R."/>
            <person name="Doucette-Stamm L.A."/>
            <person name="Deloughery C."/>
            <person name="Lee H.-M."/>
            <person name="Dubois J."/>
            <person name="Aldredge T."/>
            <person name="Bashirzadeh R."/>
            <person name="Blakely D."/>
            <person name="Cook R."/>
            <person name="Gilbert K."/>
            <person name="Harrison D."/>
            <person name="Hoang L."/>
            <person name="Keagle P."/>
            <person name="Lumm W."/>
            <person name="Pothier B."/>
            <person name="Qiu D."/>
            <person name="Spadafora R."/>
            <person name="Vicare R."/>
            <person name="Wang Y."/>
            <person name="Wierzbowski J."/>
            <person name="Gibson R."/>
            <person name="Jiwani N."/>
            <person name="Caruso A."/>
            <person name="Bush D."/>
            <person name="Safer H."/>
            <person name="Patwell D."/>
            <person name="Prabhakar S."/>
            <person name="McDougall S."/>
            <person name="Shimer G."/>
            <person name="Goyal A."/>
            <person name="Pietrovski S."/>
            <person name="Church G.M."/>
            <person name="Daniels C.J."/>
            <person name="Mao J.-I."/>
            <person name="Rice P."/>
            <person name="Noelling J."/>
            <person name="Reeve J.N."/>
        </authorList>
    </citation>
    <scope>NUCLEOTIDE SEQUENCE [LARGE SCALE GENOMIC DNA]</scope>
    <source>
        <strain evidence="7">ATCC 29096 / DSM 1053 / JCM 10044 / NBRC 100330 / Delta H</strain>
    </source>
</reference>
<reference evidence="6" key="2">
    <citation type="journal article" date="2002" name="Biochemistry">
        <title>Identification of a novel archaebacterial thioredoxin: determination of function through structure.</title>
        <authorList>
            <person name="Bhattacharyya S."/>
            <person name="Habibi-Nazhad B."/>
            <person name="Amegbey G."/>
            <person name="Slupsky C.M."/>
            <person name="Yee A."/>
            <person name="Arrowsmith C."/>
            <person name="Wishart D.S."/>
        </authorList>
    </citation>
    <scope>STRUCTURE BY NMR</scope>
    <scope>FUNCTION</scope>
    <scope>CATALYTIC ACTIVITY</scope>
</reference>
<protein>
    <recommendedName>
        <fullName evidence="3">Thioredoxin</fullName>
    </recommendedName>
</protein>
<accession>O26981</accession>
<evidence type="ECO:0000250" key="1">
    <source>
        <dbReference type="UniProtKB" id="P0AA25"/>
    </source>
</evidence>
<evidence type="ECO:0000269" key="2">
    <source>
    </source>
</evidence>
<evidence type="ECO:0000303" key="3">
    <source>
    </source>
</evidence>
<evidence type="ECO:0000305" key="4"/>
<evidence type="ECO:0000312" key="5">
    <source>
        <dbReference type="EMBL" id="AAB85393.1"/>
    </source>
</evidence>
<evidence type="ECO:0000312" key="6">
    <source>
        <dbReference type="PDB" id="1ILO"/>
    </source>
</evidence>
<evidence type="ECO:0000312" key="7">
    <source>
        <dbReference type="Proteomes" id="UP000005223"/>
    </source>
</evidence>
<evidence type="ECO:0007829" key="8">
    <source>
        <dbReference type="PDB" id="1ILO"/>
    </source>
</evidence>